<protein>
    <recommendedName>
        <fullName>ATP synthase subunit 9, mitochondrial</fullName>
    </recommendedName>
    <alternativeName>
        <fullName>Lipid-binding protein</fullName>
    </alternativeName>
</protein>
<feature type="chain" id="PRO_0000112226" description="ATP synthase subunit 9, mitochondrial">
    <location>
        <begin position="1"/>
        <end position="74"/>
    </location>
</feature>
<feature type="transmembrane region" description="Helical" evidence="2">
    <location>
        <begin position="8"/>
        <end position="28"/>
    </location>
</feature>
<feature type="transmembrane region" description="Helical" evidence="2">
    <location>
        <begin position="50"/>
        <end position="70"/>
    </location>
</feature>
<feature type="site" description="Reversibly protonated during proton transport" evidence="1">
    <location>
        <position position="57"/>
    </location>
</feature>
<keyword id="KW-0067">ATP-binding</keyword>
<keyword id="KW-0138">CF(0)</keyword>
<keyword id="KW-0903">Direct protein sequencing</keyword>
<keyword id="KW-0375">Hydrogen ion transport</keyword>
<keyword id="KW-0406">Ion transport</keyword>
<keyword id="KW-0446">Lipid-binding</keyword>
<keyword id="KW-0472">Membrane</keyword>
<keyword id="KW-0496">Mitochondrion</keyword>
<keyword id="KW-0547">Nucleotide-binding</keyword>
<keyword id="KW-1185">Reference proteome</keyword>
<keyword id="KW-0691">RNA editing</keyword>
<keyword id="KW-0812">Transmembrane</keyword>
<keyword id="KW-1133">Transmembrane helix</keyword>
<keyword id="KW-0813">Transport</keyword>
<comment type="function">
    <text>This protein is one of the chains of the nonenzymatic membrane component (F0) of mitochondrial ATPase.</text>
</comment>
<comment type="subunit">
    <text>F-type ATPases have 2 components, CF(1) - the catalytic core - and CF(0) - the membrane proton channel. CF(1) has five subunits: alpha(3), beta(3), gamma(1), delta(1), epsilon(1). CF(0) has three main subunits: a, b and c.</text>
</comment>
<comment type="subcellular location">
    <subcellularLocation>
        <location evidence="3">Mitochondrion membrane</location>
        <topology evidence="3">Multi-pass membrane protein</topology>
    </subcellularLocation>
</comment>
<comment type="RNA editing">
    <location>
        <position position="7"/>
    </location>
    <location>
        <position position="28"/>
    </location>
    <location>
        <position position="45"/>
    </location>
    <location>
        <position position="64"/>
    </location>
    <location>
        <position position="71"/>
    </location>
    <location>
        <position position="75"/>
    </location>
    <text>The stop codon at position 75 is created by RNA editing.</text>
</comment>
<comment type="similarity">
    <text evidence="3">Belongs to the ATPase C chain family.</text>
</comment>
<gene>
    <name type="primary">ATP9</name>
</gene>
<sequence length="74" mass="7557">MLEGAKLIGAGAATIALAGAAVGIGNVFSSLIHSVARNPSLAKQLFGYAILGFALTEAIALFALMMAFLILFVF</sequence>
<proteinExistence type="evidence at protein level"/>
<evidence type="ECO:0000250" key="1"/>
<evidence type="ECO:0000255" key="2"/>
<evidence type="ECO:0000305" key="3"/>
<reference key="1">
    <citation type="journal article" date="1989" name="Nucleic Acids Res.">
        <title>Wheat mitochondrial DNA: organization and sequences of the atpA and atp9 genes.</title>
        <authorList>
            <person name="Schulte E."/>
            <person name="Staubach S."/>
            <person name="Laser B."/>
            <person name="Kueck U."/>
        </authorList>
    </citation>
    <scope>NUCLEOTIDE SEQUENCE [GENOMIC DNA]</scope>
</reference>
<reference key="2">
    <citation type="journal article" date="1989" name="Plant Mol. Biol.">
        <title>Comparison of the wheat mitochondrial atp9 gene sequence with mitochondrial and chloroplast homologues from other plants.</title>
        <authorList>
            <person name="Bonhomme S."/>
            <person name="Bird S."/>
            <person name="Bonen L."/>
        </authorList>
    </citation>
    <scope>NUCLEOTIDE SEQUENCE [GENOMIC DNA]</scope>
    <source>
        <strain>cv. Thatcher</strain>
    </source>
</reference>
<reference key="3">
    <citation type="journal article" date="1990" name="Nucleic Acids Res.">
        <title>RNA editing of the mitochondrial atp9 transcript from wheat.</title>
        <authorList>
            <person name="Nowak C."/>
            <person name="Kueck U."/>
        </authorList>
    </citation>
    <scope>NUCLEOTIDE SEQUENCE [MRNA]</scope>
</reference>
<reference key="4">
    <citation type="journal article" date="1990" name="Plant Cell">
        <title>RNA editing of wheat mitochondrial ATP synthase subunit 9: direct protein and cDNA sequencing.</title>
        <authorList>
            <person name="Begu D."/>
            <person name="Graves P.V."/>
            <person name="Domec C."/>
            <person name="Arselin G."/>
            <person name="Litvak S."/>
            <person name="Araya A."/>
        </authorList>
    </citation>
    <scope>NUCLEOTIDE SEQUENCE [MRNA]</scope>
    <scope>PROTEIN SEQUENCE OF 67-74</scope>
</reference>
<reference key="5">
    <citation type="journal article" date="1990" name="J. Mol. Biol.">
        <title>Direct protein sequencing of wheat mitochondrial ATP synthase subunit 9 confirms RNA editing in plants.</title>
        <authorList>
            <person name="Graves P.V."/>
            <person name="Begu D."/>
            <person name="Velours J."/>
            <person name="Neau E."/>
            <person name="Belloc F."/>
            <person name="Litvak S."/>
            <person name="Araya A."/>
        </authorList>
    </citation>
    <scope>PROTEIN SEQUENCE OF 1-32</scope>
</reference>
<accession>P13547</accession>
<dbReference type="EMBL" id="X15919">
    <property type="protein sequence ID" value="CAA34061.1"/>
    <property type="status" value="ALT_SEQ"/>
    <property type="molecule type" value="Genomic_DNA"/>
</dbReference>
<dbReference type="EMBL" id="X15083">
    <property type="protein sequence ID" value="CAA33193.1"/>
    <property type="status" value="ALT_SEQ"/>
    <property type="molecule type" value="Genomic_DNA"/>
</dbReference>
<dbReference type="EMBL" id="X54621">
    <property type="protein sequence ID" value="CAA38441.1"/>
    <property type="molecule type" value="mRNA"/>
</dbReference>
<dbReference type="EMBL" id="S47364">
    <property type="protein sequence ID" value="AAB23976.1"/>
    <property type="molecule type" value="mRNA"/>
</dbReference>
<dbReference type="PIR" id="S12631">
    <property type="entry name" value="LWWTM"/>
</dbReference>
<dbReference type="RefSeq" id="YP_398394.1">
    <property type="nucleotide sequence ID" value="NC_007579.1"/>
</dbReference>
<dbReference type="SMR" id="P13547"/>
<dbReference type="PaxDb" id="4565-EPlTAEP00000010113"/>
<dbReference type="eggNOG" id="ENOG502S4GY">
    <property type="taxonomic scope" value="Eukaryota"/>
</dbReference>
<dbReference type="Proteomes" id="UP000019116">
    <property type="component" value="Unplaced"/>
</dbReference>
<dbReference type="GO" id="GO:0031966">
    <property type="term" value="C:mitochondrial membrane"/>
    <property type="evidence" value="ECO:0007669"/>
    <property type="project" value="UniProtKB-SubCell"/>
</dbReference>
<dbReference type="GO" id="GO:0045259">
    <property type="term" value="C:proton-transporting ATP synthase complex"/>
    <property type="evidence" value="ECO:0007669"/>
    <property type="project" value="UniProtKB-KW"/>
</dbReference>
<dbReference type="GO" id="GO:0033177">
    <property type="term" value="C:proton-transporting two-sector ATPase complex, proton-transporting domain"/>
    <property type="evidence" value="ECO:0007669"/>
    <property type="project" value="InterPro"/>
</dbReference>
<dbReference type="GO" id="GO:0005524">
    <property type="term" value="F:ATP binding"/>
    <property type="evidence" value="ECO:0007669"/>
    <property type="project" value="UniProtKB-KW"/>
</dbReference>
<dbReference type="GO" id="GO:0008289">
    <property type="term" value="F:lipid binding"/>
    <property type="evidence" value="ECO:0007669"/>
    <property type="project" value="UniProtKB-KW"/>
</dbReference>
<dbReference type="GO" id="GO:0015078">
    <property type="term" value="F:proton transmembrane transporter activity"/>
    <property type="evidence" value="ECO:0007669"/>
    <property type="project" value="InterPro"/>
</dbReference>
<dbReference type="GO" id="GO:0015986">
    <property type="term" value="P:proton motive force-driven ATP synthesis"/>
    <property type="evidence" value="ECO:0007669"/>
    <property type="project" value="InterPro"/>
</dbReference>
<dbReference type="CDD" id="cd18182">
    <property type="entry name" value="ATP-synt_Fo_c_ATP5G3"/>
    <property type="match status" value="1"/>
</dbReference>
<dbReference type="FunFam" id="1.20.20.10:FF:000005">
    <property type="entry name" value="ATP synthase subunit 9, mitochondrial"/>
    <property type="match status" value="1"/>
</dbReference>
<dbReference type="Gene3D" id="1.20.20.10">
    <property type="entry name" value="F1F0 ATP synthase subunit C"/>
    <property type="match status" value="1"/>
</dbReference>
<dbReference type="HAMAP" id="MF_01396">
    <property type="entry name" value="ATP_synth_c_bact"/>
    <property type="match status" value="1"/>
</dbReference>
<dbReference type="InterPro" id="IPR000454">
    <property type="entry name" value="ATP_synth_F0_csu"/>
</dbReference>
<dbReference type="InterPro" id="IPR020537">
    <property type="entry name" value="ATP_synth_F0_csu_DDCD_BS"/>
</dbReference>
<dbReference type="InterPro" id="IPR038662">
    <property type="entry name" value="ATP_synth_F0_csu_sf"/>
</dbReference>
<dbReference type="InterPro" id="IPR002379">
    <property type="entry name" value="ATPase_proteolipid_c-like_dom"/>
</dbReference>
<dbReference type="InterPro" id="IPR035921">
    <property type="entry name" value="F/V-ATP_Csub_sf"/>
</dbReference>
<dbReference type="PANTHER" id="PTHR10031">
    <property type="entry name" value="ATP SYNTHASE LIPID-BINDING PROTEIN, MITOCHONDRIAL"/>
    <property type="match status" value="1"/>
</dbReference>
<dbReference type="PANTHER" id="PTHR10031:SF0">
    <property type="entry name" value="ATPASE PROTEIN 9"/>
    <property type="match status" value="1"/>
</dbReference>
<dbReference type="Pfam" id="PF00137">
    <property type="entry name" value="ATP-synt_C"/>
    <property type="match status" value="1"/>
</dbReference>
<dbReference type="PRINTS" id="PR00124">
    <property type="entry name" value="ATPASEC"/>
</dbReference>
<dbReference type="SUPFAM" id="SSF81333">
    <property type="entry name" value="F1F0 ATP synthase subunit C"/>
    <property type="match status" value="1"/>
</dbReference>
<dbReference type="PROSITE" id="PS00605">
    <property type="entry name" value="ATPASE_C"/>
    <property type="match status" value="1"/>
</dbReference>
<geneLocation type="mitochondrion"/>
<organism>
    <name type="scientific">Triticum aestivum</name>
    <name type="common">Wheat</name>
    <dbReference type="NCBI Taxonomy" id="4565"/>
    <lineage>
        <taxon>Eukaryota</taxon>
        <taxon>Viridiplantae</taxon>
        <taxon>Streptophyta</taxon>
        <taxon>Embryophyta</taxon>
        <taxon>Tracheophyta</taxon>
        <taxon>Spermatophyta</taxon>
        <taxon>Magnoliopsida</taxon>
        <taxon>Liliopsida</taxon>
        <taxon>Poales</taxon>
        <taxon>Poaceae</taxon>
        <taxon>BOP clade</taxon>
        <taxon>Pooideae</taxon>
        <taxon>Triticodae</taxon>
        <taxon>Triticeae</taxon>
        <taxon>Triticinae</taxon>
        <taxon>Triticum</taxon>
    </lineage>
</organism>
<name>ATP9_WHEAT</name>